<reference key="1">
    <citation type="journal article" date="2011" name="J. Proteome Res.">
        <title>Identification of novel proteins from the venom of a cryptic snake Drysdalia coronoides by a combined transcriptomics and proteomics approach.</title>
        <authorList>
            <person name="Chatrath S.T."/>
            <person name="Chapeaurouge A."/>
            <person name="Lin Q."/>
            <person name="Lim T.K."/>
            <person name="Dunstan N."/>
            <person name="Mirtschin P."/>
            <person name="Kumar P.P."/>
            <person name="Kini R.M."/>
        </authorList>
    </citation>
    <scope>NUCLEOTIDE SEQUENCE [MRNA]</scope>
    <scope>IDENTIFICATION BY MASS SPECTROMETRY</scope>
    <scope>SUBCELLULAR LOCATION</scope>
    <source>
        <tissue>Venom</tissue>
        <tissue>Venom gland</tissue>
    </source>
</reference>
<name>3S12A_DRYCN</name>
<accession>F8J2G3</accession>
<dbReference type="EMBL" id="FJ752481">
    <property type="protein sequence ID" value="ACR78503.1"/>
    <property type="molecule type" value="mRNA"/>
</dbReference>
<dbReference type="SMR" id="F8J2G3"/>
<dbReference type="GO" id="GO:0005576">
    <property type="term" value="C:extracellular region"/>
    <property type="evidence" value="ECO:0007669"/>
    <property type="project" value="UniProtKB-SubCell"/>
</dbReference>
<dbReference type="GO" id="GO:0030550">
    <property type="term" value="F:acetylcholine receptor inhibitor activity"/>
    <property type="evidence" value="ECO:0007669"/>
    <property type="project" value="UniProtKB-KW"/>
</dbReference>
<dbReference type="GO" id="GO:0099106">
    <property type="term" value="F:ion channel regulator activity"/>
    <property type="evidence" value="ECO:0007669"/>
    <property type="project" value="UniProtKB-KW"/>
</dbReference>
<dbReference type="GO" id="GO:0090729">
    <property type="term" value="F:toxin activity"/>
    <property type="evidence" value="ECO:0007669"/>
    <property type="project" value="UniProtKB-KW"/>
</dbReference>
<dbReference type="CDD" id="cd00206">
    <property type="entry name" value="TFP_snake_toxin"/>
    <property type="match status" value="1"/>
</dbReference>
<dbReference type="FunFam" id="2.10.60.10:FF:000024">
    <property type="entry name" value="Cytotoxin 1"/>
    <property type="match status" value="1"/>
</dbReference>
<dbReference type="Gene3D" id="2.10.60.10">
    <property type="entry name" value="CD59"/>
    <property type="match status" value="1"/>
</dbReference>
<dbReference type="InterPro" id="IPR003571">
    <property type="entry name" value="Snake_3FTx"/>
</dbReference>
<dbReference type="InterPro" id="IPR045860">
    <property type="entry name" value="Snake_toxin-like_sf"/>
</dbReference>
<dbReference type="InterPro" id="IPR018354">
    <property type="entry name" value="Snake_toxin_con_site"/>
</dbReference>
<dbReference type="InterPro" id="IPR054131">
    <property type="entry name" value="Toxin_cobra-type"/>
</dbReference>
<dbReference type="Pfam" id="PF21947">
    <property type="entry name" value="Toxin_cobra-type"/>
    <property type="match status" value="1"/>
</dbReference>
<dbReference type="SUPFAM" id="SSF57302">
    <property type="entry name" value="Snake toxin-like"/>
    <property type="match status" value="1"/>
</dbReference>
<dbReference type="PROSITE" id="PS00272">
    <property type="entry name" value="SNAKE_TOXIN"/>
    <property type="match status" value="1"/>
</dbReference>
<comment type="function">
    <text evidence="3">Binds to muscle nicotinic acetylcholine receptor (nAChR) and inhibit acetylcholine from binding to the receptor, thereby impairing neuromuscular transmission.</text>
</comment>
<comment type="subcellular location">
    <subcellularLocation>
        <location evidence="4">Secreted</location>
    </subcellularLocation>
</comment>
<comment type="tissue specificity">
    <text evidence="5">Expressed by the venom gland.</text>
</comment>
<comment type="similarity">
    <text evidence="5">Belongs to the three-finger toxin family. Short-chain subfamily. Type I alpha-neurotoxin sub-subfamily.</text>
</comment>
<keyword id="KW-0008">Acetylcholine receptor inhibiting toxin</keyword>
<keyword id="KW-1015">Disulfide bond</keyword>
<keyword id="KW-0872">Ion channel impairing toxin</keyword>
<keyword id="KW-0528">Neurotoxin</keyword>
<keyword id="KW-0629">Postsynaptic neurotoxin</keyword>
<keyword id="KW-0964">Secreted</keyword>
<keyword id="KW-0732">Signal</keyword>
<keyword id="KW-0800">Toxin</keyword>
<sequence>MKTLLLTLVVVTIVCLDLGYTMTCYNQQSSQPQTTTTCAESSCYKKTWRDHRGTIIERGCGCPTVKPGIQRVCCATDKCNN</sequence>
<protein>
    <recommendedName>
        <fullName>Short neurotoxin 2</fullName>
        <shortName>SNTX-2</shortName>
    </recommendedName>
</protein>
<feature type="signal peptide" evidence="1">
    <location>
        <begin position="1"/>
        <end position="21"/>
    </location>
</feature>
<feature type="chain" id="PRO_0000425519" description="Short neurotoxin 2">
    <location>
        <begin position="22"/>
        <end position="81"/>
    </location>
</feature>
<feature type="disulfide bond" evidence="2">
    <location>
        <begin position="24"/>
        <end position="43"/>
    </location>
</feature>
<feature type="disulfide bond" evidence="2">
    <location>
        <begin position="38"/>
        <end position="60"/>
    </location>
</feature>
<feature type="disulfide bond" evidence="2">
    <location>
        <begin position="62"/>
        <end position="73"/>
    </location>
</feature>
<feature type="disulfide bond" evidence="2">
    <location>
        <begin position="74"/>
        <end position="79"/>
    </location>
</feature>
<organism>
    <name type="scientific">Drysdalia coronoides</name>
    <name type="common">White-lipped snake</name>
    <name type="synonym">Hoplocephalus coronoides</name>
    <dbReference type="NCBI Taxonomy" id="66186"/>
    <lineage>
        <taxon>Eukaryota</taxon>
        <taxon>Metazoa</taxon>
        <taxon>Chordata</taxon>
        <taxon>Craniata</taxon>
        <taxon>Vertebrata</taxon>
        <taxon>Euteleostomi</taxon>
        <taxon>Lepidosauria</taxon>
        <taxon>Squamata</taxon>
        <taxon>Bifurcata</taxon>
        <taxon>Unidentata</taxon>
        <taxon>Episquamata</taxon>
        <taxon>Toxicofera</taxon>
        <taxon>Serpentes</taxon>
        <taxon>Colubroidea</taxon>
        <taxon>Elapidae</taxon>
        <taxon>Notechinae</taxon>
        <taxon>Drysdalia</taxon>
    </lineage>
</organism>
<evidence type="ECO:0000250" key="1"/>
<evidence type="ECO:0000250" key="2">
    <source>
        <dbReference type="UniProtKB" id="P0C1Z0"/>
    </source>
</evidence>
<evidence type="ECO:0000250" key="3">
    <source>
        <dbReference type="UniProtKB" id="P60775"/>
    </source>
</evidence>
<evidence type="ECO:0000269" key="4">
    <source>
    </source>
</evidence>
<evidence type="ECO:0000305" key="5"/>
<proteinExistence type="evidence at protein level"/>